<dbReference type="EC" id="6.1.1.6"/>
<dbReference type="EMBL" id="AE001273">
    <property type="protein sequence ID" value="AAC68376.1"/>
    <property type="molecule type" value="Genomic_DNA"/>
</dbReference>
<dbReference type="PIR" id="E71472">
    <property type="entry name" value="E71472"/>
</dbReference>
<dbReference type="RefSeq" id="NP_220300.1">
    <property type="nucleotide sequence ID" value="NC_000117.1"/>
</dbReference>
<dbReference type="RefSeq" id="WP_010725342.1">
    <property type="nucleotide sequence ID" value="NC_000117.1"/>
</dbReference>
<dbReference type="SMR" id="O84786"/>
<dbReference type="FunCoup" id="O84786">
    <property type="interactions" value="276"/>
</dbReference>
<dbReference type="STRING" id="272561.CT_781"/>
<dbReference type="EnsemblBacteria" id="AAC68376">
    <property type="protein sequence ID" value="AAC68376"/>
    <property type="gene ID" value="CT_781"/>
</dbReference>
<dbReference type="GeneID" id="884579"/>
<dbReference type="KEGG" id="ctr:CT_781"/>
<dbReference type="PATRIC" id="fig|272561.5.peg.858"/>
<dbReference type="HOGENOM" id="CLU_008255_6_0_0"/>
<dbReference type="InParanoid" id="O84786"/>
<dbReference type="OrthoDB" id="9802326at2"/>
<dbReference type="Proteomes" id="UP000000431">
    <property type="component" value="Chromosome"/>
</dbReference>
<dbReference type="GO" id="GO:0005737">
    <property type="term" value="C:cytoplasm"/>
    <property type="evidence" value="ECO:0000318"/>
    <property type="project" value="GO_Central"/>
</dbReference>
<dbReference type="GO" id="GO:0005829">
    <property type="term" value="C:cytosol"/>
    <property type="evidence" value="ECO:0000318"/>
    <property type="project" value="GO_Central"/>
</dbReference>
<dbReference type="GO" id="GO:0005524">
    <property type="term" value="F:ATP binding"/>
    <property type="evidence" value="ECO:0007669"/>
    <property type="project" value="UniProtKB-UniRule"/>
</dbReference>
<dbReference type="GO" id="GO:0004824">
    <property type="term" value="F:lysine-tRNA ligase activity"/>
    <property type="evidence" value="ECO:0000318"/>
    <property type="project" value="GO_Central"/>
</dbReference>
<dbReference type="GO" id="GO:0000287">
    <property type="term" value="F:magnesium ion binding"/>
    <property type="evidence" value="ECO:0007669"/>
    <property type="project" value="UniProtKB-UniRule"/>
</dbReference>
<dbReference type="GO" id="GO:0000049">
    <property type="term" value="F:tRNA binding"/>
    <property type="evidence" value="ECO:0000318"/>
    <property type="project" value="GO_Central"/>
</dbReference>
<dbReference type="GO" id="GO:0006430">
    <property type="term" value="P:lysyl-tRNA aminoacylation"/>
    <property type="evidence" value="ECO:0000318"/>
    <property type="project" value="GO_Central"/>
</dbReference>
<dbReference type="CDD" id="cd04322">
    <property type="entry name" value="LysRS_N"/>
    <property type="match status" value="1"/>
</dbReference>
<dbReference type="FunFam" id="2.40.50.140:FF:000024">
    <property type="entry name" value="Lysine--tRNA ligase"/>
    <property type="match status" value="1"/>
</dbReference>
<dbReference type="FunFam" id="3.30.930.10:FF:000165">
    <property type="entry name" value="Lysine--tRNA ligase"/>
    <property type="match status" value="1"/>
</dbReference>
<dbReference type="Gene3D" id="3.30.930.10">
    <property type="entry name" value="Bira Bifunctional Protein, Domain 2"/>
    <property type="match status" value="1"/>
</dbReference>
<dbReference type="Gene3D" id="2.40.50.140">
    <property type="entry name" value="Nucleic acid-binding proteins"/>
    <property type="match status" value="1"/>
</dbReference>
<dbReference type="HAMAP" id="MF_00252">
    <property type="entry name" value="Lys_tRNA_synth_class2"/>
    <property type="match status" value="1"/>
</dbReference>
<dbReference type="InterPro" id="IPR004364">
    <property type="entry name" value="Aa-tRNA-synt_II"/>
</dbReference>
<dbReference type="InterPro" id="IPR006195">
    <property type="entry name" value="aa-tRNA-synth_II"/>
</dbReference>
<dbReference type="InterPro" id="IPR045864">
    <property type="entry name" value="aa-tRNA-synth_II/BPL/LPL"/>
</dbReference>
<dbReference type="InterPro" id="IPR002313">
    <property type="entry name" value="Lys-tRNA-ligase_II"/>
</dbReference>
<dbReference type="InterPro" id="IPR044136">
    <property type="entry name" value="Lys-tRNA-ligase_II_N"/>
</dbReference>
<dbReference type="InterPro" id="IPR018149">
    <property type="entry name" value="Lys-tRNA-synth_II_C"/>
</dbReference>
<dbReference type="InterPro" id="IPR012340">
    <property type="entry name" value="NA-bd_OB-fold"/>
</dbReference>
<dbReference type="InterPro" id="IPR004365">
    <property type="entry name" value="NA-bd_OB_tRNA"/>
</dbReference>
<dbReference type="NCBIfam" id="TIGR00499">
    <property type="entry name" value="lysS_bact"/>
    <property type="match status" value="1"/>
</dbReference>
<dbReference type="NCBIfam" id="NF001756">
    <property type="entry name" value="PRK00484.1"/>
    <property type="match status" value="1"/>
</dbReference>
<dbReference type="PANTHER" id="PTHR42918:SF15">
    <property type="entry name" value="LYSINE--TRNA LIGASE, CHLOROPLASTIC_MITOCHONDRIAL"/>
    <property type="match status" value="1"/>
</dbReference>
<dbReference type="PANTHER" id="PTHR42918">
    <property type="entry name" value="LYSYL-TRNA SYNTHETASE"/>
    <property type="match status" value="1"/>
</dbReference>
<dbReference type="Pfam" id="PF00152">
    <property type="entry name" value="tRNA-synt_2"/>
    <property type="match status" value="1"/>
</dbReference>
<dbReference type="Pfam" id="PF01336">
    <property type="entry name" value="tRNA_anti-codon"/>
    <property type="match status" value="1"/>
</dbReference>
<dbReference type="PRINTS" id="PR00982">
    <property type="entry name" value="TRNASYNTHLYS"/>
</dbReference>
<dbReference type="SUPFAM" id="SSF55681">
    <property type="entry name" value="Class II aaRS and biotin synthetases"/>
    <property type="match status" value="1"/>
</dbReference>
<dbReference type="SUPFAM" id="SSF50249">
    <property type="entry name" value="Nucleic acid-binding proteins"/>
    <property type="match status" value="1"/>
</dbReference>
<dbReference type="PROSITE" id="PS50862">
    <property type="entry name" value="AA_TRNA_LIGASE_II"/>
    <property type="match status" value="1"/>
</dbReference>
<comment type="catalytic activity">
    <reaction>
        <text>tRNA(Lys) + L-lysine + ATP = L-lysyl-tRNA(Lys) + AMP + diphosphate</text>
        <dbReference type="Rhea" id="RHEA:20792"/>
        <dbReference type="Rhea" id="RHEA-COMP:9696"/>
        <dbReference type="Rhea" id="RHEA-COMP:9697"/>
        <dbReference type="ChEBI" id="CHEBI:30616"/>
        <dbReference type="ChEBI" id="CHEBI:32551"/>
        <dbReference type="ChEBI" id="CHEBI:33019"/>
        <dbReference type="ChEBI" id="CHEBI:78442"/>
        <dbReference type="ChEBI" id="CHEBI:78529"/>
        <dbReference type="ChEBI" id="CHEBI:456215"/>
        <dbReference type="EC" id="6.1.1.6"/>
    </reaction>
</comment>
<comment type="cofactor">
    <cofactor evidence="1">
        <name>Mg(2+)</name>
        <dbReference type="ChEBI" id="CHEBI:18420"/>
    </cofactor>
    <text evidence="1">Binds 3 Mg(2+) ions per subunit.</text>
</comment>
<comment type="subunit">
    <text evidence="1">Homodimer.</text>
</comment>
<comment type="subcellular location">
    <subcellularLocation>
        <location evidence="1">Cytoplasm</location>
    </subcellularLocation>
</comment>
<comment type="similarity">
    <text evidence="2">Belongs to the class-II aminoacyl-tRNA synthetase family.</text>
</comment>
<evidence type="ECO:0000250" key="1"/>
<evidence type="ECO:0000305" key="2"/>
<protein>
    <recommendedName>
        <fullName>Lysine--tRNA ligase</fullName>
        <ecNumber>6.1.1.6</ecNumber>
    </recommendedName>
    <alternativeName>
        <fullName>Lysyl-tRNA synthetase</fullName>
        <shortName>LysRS</shortName>
    </alternativeName>
</protein>
<sequence>MSVEVEYLQHEDYLYRTSKLKEIRDLGINPYPYQYTDCLEVQEIRNQFVDNELGDSEAAFRKETPKVRFAGRLVLFRSMGKNSFGQILDNDAKIQVMFNRDFSAVAGLAADAGISPIKFIEKKLDLGDILGLEGYLFFTHSGELTVLVETVTLLCKSLISLPDKHAGLADKEIRYRKRWADLISSEDVRKTFLTRSRILKLIREYMDQQSFLEVETPILQTIYGGAEATPFVTTLQALHAEMFLRISLEIALKKLLVGGMSRVYEIGKVFRNEGIDRTHNPEFTMIEAYAAYWDYNDVMKCVENLVEYIVRALNNGETQVQYSHLKSGPQVVDFKAPWIRMTMKESISVYGGVDVDLHADHELRKILETQTSLPEKTYVHASRGELIALLFDELVCDKLIAPHHITDHPLETTPLCKTLRSGDETLVERFESFCLGKELCNAYSELNDPLQQRKLLEEQMRKKALNPDSEYHPIDEEFLEALCQGMPPAGGFGIGIDRLVMMLTDAASIRDVLFFPVMRRIEAKKD</sequence>
<organism>
    <name type="scientific">Chlamydia trachomatis serovar D (strain ATCC VR-885 / DSM 19411 / UW-3/Cx)</name>
    <dbReference type="NCBI Taxonomy" id="272561"/>
    <lineage>
        <taxon>Bacteria</taxon>
        <taxon>Pseudomonadati</taxon>
        <taxon>Chlamydiota</taxon>
        <taxon>Chlamydiia</taxon>
        <taxon>Chlamydiales</taxon>
        <taxon>Chlamydiaceae</taxon>
        <taxon>Chlamydia/Chlamydophila group</taxon>
        <taxon>Chlamydia</taxon>
    </lineage>
</organism>
<reference key="1">
    <citation type="journal article" date="1998" name="Science">
        <title>Genome sequence of an obligate intracellular pathogen of humans: Chlamydia trachomatis.</title>
        <authorList>
            <person name="Stephens R.S."/>
            <person name="Kalman S."/>
            <person name="Lammel C.J."/>
            <person name="Fan J."/>
            <person name="Marathe R."/>
            <person name="Aravind L."/>
            <person name="Mitchell W.P."/>
            <person name="Olinger L."/>
            <person name="Tatusov R.L."/>
            <person name="Zhao Q."/>
            <person name="Koonin E.V."/>
            <person name="Davis R.W."/>
        </authorList>
    </citation>
    <scope>NUCLEOTIDE SEQUENCE [LARGE SCALE GENOMIC DNA]</scope>
    <source>
        <strain>ATCC VR-885 / DSM 19411 / UW-3/Cx</strain>
    </source>
</reference>
<accession>O84786</accession>
<feature type="chain" id="PRO_0000152615" description="Lysine--tRNA ligase">
    <location>
        <begin position="1"/>
        <end position="526"/>
    </location>
</feature>
<feature type="binding site" evidence="1">
    <location>
        <position position="431"/>
    </location>
    <ligand>
        <name>Mg(2+)</name>
        <dbReference type="ChEBI" id="CHEBI:18420"/>
        <label>1</label>
    </ligand>
</feature>
<feature type="binding site" evidence="1">
    <location>
        <position position="438"/>
    </location>
    <ligand>
        <name>Mg(2+)</name>
        <dbReference type="ChEBI" id="CHEBI:18420"/>
        <label>1</label>
    </ligand>
</feature>
<feature type="binding site" evidence="1">
    <location>
        <position position="438"/>
    </location>
    <ligand>
        <name>Mg(2+)</name>
        <dbReference type="ChEBI" id="CHEBI:18420"/>
        <label>2</label>
    </ligand>
</feature>
<name>SYK_CHLTR</name>
<keyword id="KW-0030">Aminoacyl-tRNA synthetase</keyword>
<keyword id="KW-0067">ATP-binding</keyword>
<keyword id="KW-0963">Cytoplasm</keyword>
<keyword id="KW-0436">Ligase</keyword>
<keyword id="KW-0460">Magnesium</keyword>
<keyword id="KW-0479">Metal-binding</keyword>
<keyword id="KW-0547">Nucleotide-binding</keyword>
<keyword id="KW-0648">Protein biosynthesis</keyword>
<keyword id="KW-1185">Reference proteome</keyword>
<gene>
    <name type="primary">lysS</name>
    <name type="ordered locus">CT_781</name>
</gene>
<proteinExistence type="inferred from homology"/>